<evidence type="ECO:0000250" key="1">
    <source>
        <dbReference type="UniProtKB" id="P45563"/>
    </source>
</evidence>
<evidence type="ECO:0000250" key="2">
    <source>
        <dbReference type="UniProtKB" id="P77834"/>
    </source>
</evidence>
<evidence type="ECO:0000250" key="3">
    <source>
        <dbReference type="UniProtKB" id="P9WP01"/>
    </source>
</evidence>
<evidence type="ECO:0000269" key="4">
    <source>
    </source>
</evidence>
<evidence type="ECO:0000305" key="5"/>
<comment type="function">
    <text evidence="2">The purine nucleoside phosphorylases catalyze the phosphorolytic breakdown of the N-glycosidic bond in the beta-(deoxy)ribonucleoside molecules, with the formation of the corresponding free purine bases and pentose-1-phosphate. Cleaves guanosine, inosine, 2'-deoxyguanosine and 2'-deoxyinosine.</text>
</comment>
<comment type="catalytic activity">
    <reaction evidence="2">
        <text>a purine 2'-deoxy-D-ribonucleoside + phosphate = a purine nucleobase + 2-deoxy-alpha-D-ribose 1-phosphate</text>
        <dbReference type="Rhea" id="RHEA:36431"/>
        <dbReference type="ChEBI" id="CHEBI:26386"/>
        <dbReference type="ChEBI" id="CHEBI:43474"/>
        <dbReference type="ChEBI" id="CHEBI:57259"/>
        <dbReference type="ChEBI" id="CHEBI:142361"/>
        <dbReference type="EC" id="2.4.2.1"/>
    </reaction>
</comment>
<comment type="pathway">
    <text>Purine metabolism; purine nucleoside salvage.</text>
</comment>
<comment type="subunit">
    <text evidence="2">Homotrimer.</text>
</comment>
<comment type="similarity">
    <text evidence="5">Belongs to the PNP/MTAP phosphorylase family.</text>
</comment>
<dbReference type="EC" id="2.4.2.1"/>
<dbReference type="EMBL" id="U32685">
    <property type="protein sequence ID" value="AAA74434.1"/>
    <property type="molecule type" value="Genomic_DNA"/>
</dbReference>
<dbReference type="EMBL" id="D84432">
    <property type="protein sequence ID" value="BAA12651.1"/>
    <property type="molecule type" value="Genomic_DNA"/>
</dbReference>
<dbReference type="EMBL" id="AL009126">
    <property type="protein sequence ID" value="CAB14281.1"/>
    <property type="molecule type" value="Genomic_DNA"/>
</dbReference>
<dbReference type="EMBL" id="M85047">
    <property type="status" value="NOT_ANNOTATED_CDS"/>
    <property type="molecule type" value="Genomic_DNA"/>
</dbReference>
<dbReference type="PIR" id="D69680">
    <property type="entry name" value="D69680"/>
</dbReference>
<dbReference type="RefSeq" id="WP_003230447.1">
    <property type="nucleotide sequence ID" value="NZ_OZ025638.1"/>
</dbReference>
<dbReference type="SMR" id="P46354"/>
<dbReference type="FunCoup" id="P46354">
    <property type="interactions" value="474"/>
</dbReference>
<dbReference type="STRING" id="224308.BSU23490"/>
<dbReference type="iPTMnet" id="P46354"/>
<dbReference type="jPOST" id="P46354"/>
<dbReference type="PaxDb" id="224308-BSU23490"/>
<dbReference type="EnsemblBacteria" id="CAB14281">
    <property type="protein sequence ID" value="CAB14281"/>
    <property type="gene ID" value="BSU_23490"/>
</dbReference>
<dbReference type="GeneID" id="938731"/>
<dbReference type="KEGG" id="bsu:BSU23490"/>
<dbReference type="PATRIC" id="fig|224308.179.peg.2559"/>
<dbReference type="eggNOG" id="COG0005">
    <property type="taxonomic scope" value="Bacteria"/>
</dbReference>
<dbReference type="InParanoid" id="P46354"/>
<dbReference type="OrthoDB" id="1523230at2"/>
<dbReference type="PhylomeDB" id="P46354"/>
<dbReference type="BioCyc" id="BSUB:BSU23490-MONOMER"/>
<dbReference type="BRENDA" id="2.4.2.1">
    <property type="organism ID" value="658"/>
</dbReference>
<dbReference type="UniPathway" id="UPA00606"/>
<dbReference type="Proteomes" id="UP000001570">
    <property type="component" value="Chromosome"/>
</dbReference>
<dbReference type="GO" id="GO:0005737">
    <property type="term" value="C:cytoplasm"/>
    <property type="evidence" value="ECO:0000318"/>
    <property type="project" value="GO_Central"/>
</dbReference>
<dbReference type="GO" id="GO:0004731">
    <property type="term" value="F:purine-nucleoside phosphorylase activity"/>
    <property type="evidence" value="ECO:0000318"/>
    <property type="project" value="GO_Central"/>
</dbReference>
<dbReference type="GO" id="GO:0009116">
    <property type="term" value="P:nucleoside metabolic process"/>
    <property type="evidence" value="ECO:0007669"/>
    <property type="project" value="InterPro"/>
</dbReference>
<dbReference type="CDD" id="cd09009">
    <property type="entry name" value="PNP-EcPNPII_like"/>
    <property type="match status" value="1"/>
</dbReference>
<dbReference type="FunFam" id="3.40.50.1580:FF:000010">
    <property type="entry name" value="Purine nucleoside phosphorylase"/>
    <property type="match status" value="1"/>
</dbReference>
<dbReference type="Gene3D" id="3.40.50.1580">
    <property type="entry name" value="Nucleoside phosphorylase domain"/>
    <property type="match status" value="1"/>
</dbReference>
<dbReference type="InterPro" id="IPR000845">
    <property type="entry name" value="Nucleoside_phosphorylase_d"/>
</dbReference>
<dbReference type="InterPro" id="IPR035994">
    <property type="entry name" value="Nucleoside_phosphorylase_sf"/>
</dbReference>
<dbReference type="InterPro" id="IPR011270">
    <property type="entry name" value="Pur_Nuc_Pase_Ino/Guo-sp"/>
</dbReference>
<dbReference type="InterPro" id="IPR011268">
    <property type="entry name" value="Purine_phosphorylase"/>
</dbReference>
<dbReference type="InterPro" id="IPR018099">
    <property type="entry name" value="Purine_phosphorylase-2_CS"/>
</dbReference>
<dbReference type="NCBIfam" id="TIGR01700">
    <property type="entry name" value="PNPH"/>
    <property type="match status" value="1"/>
</dbReference>
<dbReference type="NCBIfam" id="TIGR01697">
    <property type="entry name" value="PNPH-PUNA-XAPA"/>
    <property type="match status" value="1"/>
</dbReference>
<dbReference type="NCBIfam" id="NF006054">
    <property type="entry name" value="PRK08202.1"/>
    <property type="match status" value="1"/>
</dbReference>
<dbReference type="PANTHER" id="PTHR11904">
    <property type="entry name" value="METHYLTHIOADENOSINE/PURINE NUCLEOSIDE PHOSPHORYLASE"/>
    <property type="match status" value="1"/>
</dbReference>
<dbReference type="PANTHER" id="PTHR11904:SF9">
    <property type="entry name" value="PURINE NUCLEOSIDE PHOSPHORYLASE-RELATED"/>
    <property type="match status" value="1"/>
</dbReference>
<dbReference type="Pfam" id="PF01048">
    <property type="entry name" value="PNP_UDP_1"/>
    <property type="match status" value="1"/>
</dbReference>
<dbReference type="PIRSF" id="PIRSF000477">
    <property type="entry name" value="PurNPase"/>
    <property type="match status" value="1"/>
</dbReference>
<dbReference type="SUPFAM" id="SSF53167">
    <property type="entry name" value="Purine and uridine phosphorylases"/>
    <property type="match status" value="1"/>
</dbReference>
<dbReference type="PROSITE" id="PS01240">
    <property type="entry name" value="PNP_MTAP_2"/>
    <property type="match status" value="1"/>
</dbReference>
<sequence>MKDRIERAAAFIKQNLPESPKIGLILGSGLGILADEIENPVKLKYEDIPEFPVSTVEGHAGQLVLGTLEGVSVIAMQGRFHFYEGYSMEKVTFPVRVMKALGVEALIVTNAAGGVNTEFRAGDLMIITDHINFMGTNPLIGPNEADFGARFPDMSSAYDKDLSSLAEKIAKDLNIPIQKGVYTAVTGPSYETPAEVRFLRTMGSDAVGMSTVPEVIVANHAGMRVLGISCISNAAAGILDQPLSHDEVMEVTEKVKAGFLKLVKAIVAQYE</sequence>
<reference key="1">
    <citation type="journal article" date="1999" name="Microbiology">
        <title>Nucleosides as a carbon source in Bacillus subtilis: characterization of the drm-pupG operon.</title>
        <authorList>
            <person name="Schuch R."/>
            <person name="Garibian A."/>
            <person name="Saxild H.H."/>
            <person name="Piggot P.J."/>
            <person name="Nygaard P."/>
        </authorList>
    </citation>
    <scope>NUCLEOTIDE SEQUENCE [GENOMIC DNA]</scope>
    <source>
        <strain>168 / BR151</strain>
    </source>
</reference>
<reference key="2">
    <citation type="journal article" date="1996" name="Microbiology">
        <title>Systematic sequencing of the 283 kb 210 degrees-232 degrees region of the Bacillus subtilis genome containing the skin element and many sporulation genes.</title>
        <authorList>
            <person name="Mizuno M."/>
            <person name="Masuda S."/>
            <person name="Takemaru K."/>
            <person name="Hosono S."/>
            <person name="Sato T."/>
            <person name="Takeuchi M."/>
            <person name="Kobayashi Y."/>
        </authorList>
    </citation>
    <scope>NUCLEOTIDE SEQUENCE [GENOMIC DNA]</scope>
    <source>
        <strain>168 / JH642</strain>
    </source>
</reference>
<reference key="3">
    <citation type="journal article" date="1997" name="Nature">
        <title>The complete genome sequence of the Gram-positive bacterium Bacillus subtilis.</title>
        <authorList>
            <person name="Kunst F."/>
            <person name="Ogasawara N."/>
            <person name="Moszer I."/>
            <person name="Albertini A.M."/>
            <person name="Alloni G."/>
            <person name="Azevedo V."/>
            <person name="Bertero M.G."/>
            <person name="Bessieres P."/>
            <person name="Bolotin A."/>
            <person name="Borchert S."/>
            <person name="Borriss R."/>
            <person name="Boursier L."/>
            <person name="Brans A."/>
            <person name="Braun M."/>
            <person name="Brignell S.C."/>
            <person name="Bron S."/>
            <person name="Brouillet S."/>
            <person name="Bruschi C.V."/>
            <person name="Caldwell B."/>
            <person name="Capuano V."/>
            <person name="Carter N.M."/>
            <person name="Choi S.-K."/>
            <person name="Codani J.-J."/>
            <person name="Connerton I.F."/>
            <person name="Cummings N.J."/>
            <person name="Daniel R.A."/>
            <person name="Denizot F."/>
            <person name="Devine K.M."/>
            <person name="Duesterhoeft A."/>
            <person name="Ehrlich S.D."/>
            <person name="Emmerson P.T."/>
            <person name="Entian K.-D."/>
            <person name="Errington J."/>
            <person name="Fabret C."/>
            <person name="Ferrari E."/>
            <person name="Foulger D."/>
            <person name="Fritz C."/>
            <person name="Fujita M."/>
            <person name="Fujita Y."/>
            <person name="Fuma S."/>
            <person name="Galizzi A."/>
            <person name="Galleron N."/>
            <person name="Ghim S.-Y."/>
            <person name="Glaser P."/>
            <person name="Goffeau A."/>
            <person name="Golightly E.J."/>
            <person name="Grandi G."/>
            <person name="Guiseppi G."/>
            <person name="Guy B.J."/>
            <person name="Haga K."/>
            <person name="Haiech J."/>
            <person name="Harwood C.R."/>
            <person name="Henaut A."/>
            <person name="Hilbert H."/>
            <person name="Holsappel S."/>
            <person name="Hosono S."/>
            <person name="Hullo M.-F."/>
            <person name="Itaya M."/>
            <person name="Jones L.-M."/>
            <person name="Joris B."/>
            <person name="Karamata D."/>
            <person name="Kasahara Y."/>
            <person name="Klaerr-Blanchard M."/>
            <person name="Klein C."/>
            <person name="Kobayashi Y."/>
            <person name="Koetter P."/>
            <person name="Koningstein G."/>
            <person name="Krogh S."/>
            <person name="Kumano M."/>
            <person name="Kurita K."/>
            <person name="Lapidus A."/>
            <person name="Lardinois S."/>
            <person name="Lauber J."/>
            <person name="Lazarevic V."/>
            <person name="Lee S.-M."/>
            <person name="Levine A."/>
            <person name="Liu H."/>
            <person name="Masuda S."/>
            <person name="Mauel C."/>
            <person name="Medigue C."/>
            <person name="Medina N."/>
            <person name="Mellado R.P."/>
            <person name="Mizuno M."/>
            <person name="Moestl D."/>
            <person name="Nakai S."/>
            <person name="Noback M."/>
            <person name="Noone D."/>
            <person name="O'Reilly M."/>
            <person name="Ogawa K."/>
            <person name="Ogiwara A."/>
            <person name="Oudega B."/>
            <person name="Park S.-H."/>
            <person name="Parro V."/>
            <person name="Pohl T.M."/>
            <person name="Portetelle D."/>
            <person name="Porwollik S."/>
            <person name="Prescott A.M."/>
            <person name="Presecan E."/>
            <person name="Pujic P."/>
            <person name="Purnelle B."/>
            <person name="Rapoport G."/>
            <person name="Rey M."/>
            <person name="Reynolds S."/>
            <person name="Rieger M."/>
            <person name="Rivolta C."/>
            <person name="Rocha E."/>
            <person name="Roche B."/>
            <person name="Rose M."/>
            <person name="Sadaie Y."/>
            <person name="Sato T."/>
            <person name="Scanlan E."/>
            <person name="Schleich S."/>
            <person name="Schroeter R."/>
            <person name="Scoffone F."/>
            <person name="Sekiguchi J."/>
            <person name="Sekowska A."/>
            <person name="Seror S.J."/>
            <person name="Serror P."/>
            <person name="Shin B.-S."/>
            <person name="Soldo B."/>
            <person name="Sorokin A."/>
            <person name="Tacconi E."/>
            <person name="Takagi T."/>
            <person name="Takahashi H."/>
            <person name="Takemaru K."/>
            <person name="Takeuchi M."/>
            <person name="Tamakoshi A."/>
            <person name="Tanaka T."/>
            <person name="Terpstra P."/>
            <person name="Tognoni A."/>
            <person name="Tosato V."/>
            <person name="Uchiyama S."/>
            <person name="Vandenbol M."/>
            <person name="Vannier F."/>
            <person name="Vassarotti A."/>
            <person name="Viari A."/>
            <person name="Wambutt R."/>
            <person name="Wedler E."/>
            <person name="Wedler H."/>
            <person name="Weitzenegger T."/>
            <person name="Winters P."/>
            <person name="Wipat A."/>
            <person name="Yamamoto H."/>
            <person name="Yamane K."/>
            <person name="Yasumoto K."/>
            <person name="Yata K."/>
            <person name="Yoshida K."/>
            <person name="Yoshikawa H.-F."/>
            <person name="Zumstein E."/>
            <person name="Yoshikawa H."/>
            <person name="Danchin A."/>
        </authorList>
    </citation>
    <scope>NUCLEOTIDE SEQUENCE [LARGE SCALE GENOMIC DNA]</scope>
    <source>
        <strain>168</strain>
    </source>
</reference>
<reference key="4">
    <citation type="journal article" date="1992" name="J. Bacteriol.">
        <title>Characterization of a Bacillus subtilis sporulation operon that includes genes for an RNA polymerase sigma factor and for a putative DD-carboxypeptidase.</title>
        <authorList>
            <person name="Wu J.-J."/>
            <person name="Schuch R."/>
            <person name="Piggot P.J."/>
        </authorList>
    </citation>
    <scope>NUCLEOTIDE SEQUENCE [GENOMIC DNA] OF 161-271</scope>
    <source>
        <strain>168 / MB24</strain>
    </source>
</reference>
<reference key="5">
    <citation type="journal article" date="2007" name="Mol. Cell. Proteomics">
        <title>The serine/threonine/tyrosine phosphoproteome of the model bacterium Bacillus subtilis.</title>
        <authorList>
            <person name="Macek B."/>
            <person name="Mijakovic I."/>
            <person name="Olsen J.V."/>
            <person name="Gnad F."/>
            <person name="Kumar C."/>
            <person name="Jensen P.R."/>
            <person name="Mann M."/>
        </authorList>
    </citation>
    <scope>PHOSPHORYLATION [LARGE SCALE ANALYSIS] AT SER-28</scope>
    <scope>IDENTIFICATION BY MASS SPECTROMETRY</scope>
    <source>
        <strain>168</strain>
    </source>
</reference>
<name>PUNA_BACSU</name>
<keyword id="KW-0328">Glycosyltransferase</keyword>
<keyword id="KW-0597">Phosphoprotein</keyword>
<keyword id="KW-1185">Reference proteome</keyword>
<keyword id="KW-0808">Transferase</keyword>
<protein>
    <recommendedName>
        <fullName>Purine nucleoside phosphorylase 1</fullName>
        <shortName>PNP 1</shortName>
        <ecNumber>2.4.2.1</ecNumber>
    </recommendedName>
    <alternativeName>
        <fullName>Inosine phosphorylase</fullName>
    </alternativeName>
    <alternativeName>
        <fullName>Inosine-guanosine phosphorylase</fullName>
    </alternativeName>
    <alternativeName>
        <fullName>Purine nucleoside phosphorylase I</fullName>
        <shortName>PNP I</shortName>
        <shortName>Pu-NPase I</shortName>
    </alternativeName>
</protein>
<gene>
    <name type="primary">punA</name>
    <name type="synonym">deoD</name>
    <name type="synonym">pnp</name>
    <name type="synonym">yqkO</name>
    <name type="ordered locus">BSU23490</name>
</gene>
<feature type="chain" id="PRO_0000184540" description="Purine nucleoside phosphorylase 1">
    <location>
        <begin position="1"/>
        <end position="271"/>
    </location>
</feature>
<feature type="binding site" evidence="3">
    <location>
        <position position="28"/>
    </location>
    <ligand>
        <name>phosphate</name>
        <dbReference type="ChEBI" id="CHEBI:43474"/>
    </ligand>
</feature>
<feature type="binding site" evidence="1">
    <location>
        <position position="59"/>
    </location>
    <ligand>
        <name>phosphate</name>
        <dbReference type="ChEBI" id="CHEBI:43474"/>
    </ligand>
</feature>
<feature type="binding site" evidence="1">
    <location>
        <begin position="79"/>
        <end position="81"/>
    </location>
    <ligand>
        <name>phosphate</name>
        <dbReference type="ChEBI" id="CHEBI:43474"/>
    </ligand>
</feature>
<feature type="binding site" evidence="1">
    <location>
        <position position="111"/>
    </location>
    <ligand>
        <name>phosphate</name>
        <dbReference type="ChEBI" id="CHEBI:43474"/>
    </ligand>
</feature>
<feature type="binding site" evidence="1">
    <location>
        <position position="191"/>
    </location>
    <ligand>
        <name>a purine D-ribonucleoside</name>
        <dbReference type="ChEBI" id="CHEBI:142355"/>
    </ligand>
</feature>
<feature type="binding site" evidence="1">
    <location>
        <position position="210"/>
    </location>
    <ligand>
        <name>phosphate</name>
        <dbReference type="ChEBI" id="CHEBI:43474"/>
    </ligand>
</feature>
<feature type="binding site" evidence="1">
    <location>
        <position position="233"/>
    </location>
    <ligand>
        <name>a purine D-ribonucleoside</name>
        <dbReference type="ChEBI" id="CHEBI:142355"/>
    </ligand>
</feature>
<feature type="modified residue" description="Phosphoserine" evidence="4">
    <location>
        <position position="28"/>
    </location>
</feature>
<feature type="sequence conflict" description="In Ref. 4; M85047." evidence="5" ref="4">
    <original>A</original>
    <variation>D</variation>
    <location>
        <position position="184"/>
    </location>
</feature>
<feature type="sequence conflict" description="In Ref. 4; M85047." evidence="5" ref="4">
    <original>G</original>
    <variation>A</variation>
    <location>
        <position position="227"/>
    </location>
</feature>
<accession>P46354</accession>
<proteinExistence type="evidence at protein level"/>
<organism>
    <name type="scientific">Bacillus subtilis (strain 168)</name>
    <dbReference type="NCBI Taxonomy" id="224308"/>
    <lineage>
        <taxon>Bacteria</taxon>
        <taxon>Bacillati</taxon>
        <taxon>Bacillota</taxon>
        <taxon>Bacilli</taxon>
        <taxon>Bacillales</taxon>
        <taxon>Bacillaceae</taxon>
        <taxon>Bacillus</taxon>
    </lineage>
</organism>